<dbReference type="EMBL" id="BX571856">
    <property type="protein sequence ID" value="CAG39363.1"/>
    <property type="molecule type" value="Genomic_DNA"/>
</dbReference>
<dbReference type="RefSeq" id="WP_000737200.1">
    <property type="nucleotide sequence ID" value="NC_002952.2"/>
</dbReference>
<dbReference type="SMR" id="Q6GJX5"/>
<dbReference type="KEGG" id="sar:SAR0340"/>
<dbReference type="HOGENOM" id="CLU_050342_0_1_9"/>
<dbReference type="Proteomes" id="UP000000596">
    <property type="component" value="Chromosome"/>
</dbReference>
<dbReference type="GO" id="GO:0005886">
    <property type="term" value="C:plasma membrane"/>
    <property type="evidence" value="ECO:0007669"/>
    <property type="project" value="UniProtKB-SubCell"/>
</dbReference>
<dbReference type="CDD" id="cd14656">
    <property type="entry name" value="Imelysin-like_EfeO"/>
    <property type="match status" value="1"/>
</dbReference>
<dbReference type="Gene3D" id="1.20.1420.20">
    <property type="entry name" value="M75 peptidase, HXXE motif"/>
    <property type="match status" value="1"/>
</dbReference>
<dbReference type="InterPro" id="IPR050894">
    <property type="entry name" value="EfeM/EfeO_iron_uptake"/>
</dbReference>
<dbReference type="InterPro" id="IPR018976">
    <property type="entry name" value="Imelysin-like"/>
</dbReference>
<dbReference type="InterPro" id="IPR034981">
    <property type="entry name" value="Imelysin-like_EfeO/Algp7"/>
</dbReference>
<dbReference type="InterPro" id="IPR038352">
    <property type="entry name" value="Imelysin_sf"/>
</dbReference>
<dbReference type="InterPro" id="IPR053377">
    <property type="entry name" value="Iron_uptake_EfeM/EfeO"/>
</dbReference>
<dbReference type="NCBIfam" id="NF041757">
    <property type="entry name" value="EfeO"/>
    <property type="match status" value="1"/>
</dbReference>
<dbReference type="PANTHER" id="PTHR39192">
    <property type="entry name" value="IRON UPTAKE SYSTEM COMPONENT EFEO"/>
    <property type="match status" value="1"/>
</dbReference>
<dbReference type="PANTHER" id="PTHR39192:SF1">
    <property type="entry name" value="IRON UPTAKE SYSTEM COMPONENT EFEO"/>
    <property type="match status" value="1"/>
</dbReference>
<dbReference type="Pfam" id="PF09375">
    <property type="entry name" value="Peptidase_M75"/>
    <property type="match status" value="1"/>
</dbReference>
<dbReference type="PROSITE" id="PS51257">
    <property type="entry name" value="PROKAR_LIPOPROTEIN"/>
    <property type="match status" value="1"/>
</dbReference>
<name>EFEMO_STAAR</name>
<gene>
    <name type="ordered locus">SAR0340</name>
</gene>
<feature type="signal peptide" evidence="1">
    <location>
        <begin position="1"/>
        <end position="17"/>
    </location>
</feature>
<feature type="chain" id="PRO_0000278311" description="Efem/EfeO family lipoprotein">
    <location>
        <begin position="18"/>
        <end position="284"/>
    </location>
</feature>
<feature type="lipid moiety-binding region" description="N-palmitoyl cysteine" evidence="1">
    <location>
        <position position="18"/>
    </location>
</feature>
<feature type="lipid moiety-binding region" description="S-diacylglycerol cysteine" evidence="1">
    <location>
        <position position="18"/>
    </location>
</feature>
<reference key="1">
    <citation type="journal article" date="2004" name="Proc. Natl. Acad. Sci. U.S.A.">
        <title>Complete genomes of two clinical Staphylococcus aureus strains: evidence for the rapid evolution of virulence and drug resistance.</title>
        <authorList>
            <person name="Holden M.T.G."/>
            <person name="Feil E.J."/>
            <person name="Lindsay J.A."/>
            <person name="Peacock S.J."/>
            <person name="Day N.P.J."/>
            <person name="Enright M.C."/>
            <person name="Foster T.J."/>
            <person name="Moore C.E."/>
            <person name="Hurst L."/>
            <person name="Atkin R."/>
            <person name="Barron A."/>
            <person name="Bason N."/>
            <person name="Bentley S.D."/>
            <person name="Chillingworth C."/>
            <person name="Chillingworth T."/>
            <person name="Churcher C."/>
            <person name="Clark L."/>
            <person name="Corton C."/>
            <person name="Cronin A."/>
            <person name="Doggett J."/>
            <person name="Dowd L."/>
            <person name="Feltwell T."/>
            <person name="Hance Z."/>
            <person name="Harris B."/>
            <person name="Hauser H."/>
            <person name="Holroyd S."/>
            <person name="Jagels K."/>
            <person name="James K.D."/>
            <person name="Lennard N."/>
            <person name="Line A."/>
            <person name="Mayes R."/>
            <person name="Moule S."/>
            <person name="Mungall K."/>
            <person name="Ormond D."/>
            <person name="Quail M.A."/>
            <person name="Rabbinowitsch E."/>
            <person name="Rutherford K.M."/>
            <person name="Sanders M."/>
            <person name="Sharp S."/>
            <person name="Simmonds M."/>
            <person name="Stevens K."/>
            <person name="Whitehead S."/>
            <person name="Barrell B.G."/>
            <person name="Spratt B.G."/>
            <person name="Parkhill J."/>
        </authorList>
    </citation>
    <scope>NUCLEOTIDE SEQUENCE [LARGE SCALE GENOMIC DNA]</scope>
    <source>
        <strain>MRSA252</strain>
    </source>
</reference>
<comment type="subcellular location">
    <subcellularLocation>
        <location evidence="1">Cell membrane</location>
        <topology evidence="1">Lipid-anchor</topology>
    </subcellularLocation>
</comment>
<comment type="similarity">
    <text evidence="2">Belongs to the EfeM/EfeO family.</text>
</comment>
<accession>Q6GJX5</accession>
<proteinExistence type="inferred from homology"/>
<keyword id="KW-1003">Cell membrane</keyword>
<keyword id="KW-0449">Lipoprotein</keyword>
<keyword id="KW-0472">Membrane</keyword>
<keyword id="KW-0564">Palmitate</keyword>
<keyword id="KW-0732">Signal</keyword>
<sequence>MKKLTTLLLASTLLIAACGNDDSKKDDSKTSKKDDGVKAELKQATKAYDKYTDEQLNEFLKGTEKFVKAIENNDMAQAKALYPKVRMYYERSEPVAEAFGDLDPKIDARLADMKEEKKEKEWSGYHKIEKALYEDKKIDDVTKKDAQQLLKNAKELHAKADTLDITPKLMLQGSVDLLNEVATSKITGEEEIYSHTDLYDFKANVEGAQKIYDLFKPILEKKDKKLSDDIQMNFDKVNKLLDKYKDNNGGYESFEKVSKKDRKAFADAVNALGEPLSKMAVITE</sequence>
<evidence type="ECO:0000255" key="1">
    <source>
        <dbReference type="PROSITE-ProRule" id="PRU00303"/>
    </source>
</evidence>
<evidence type="ECO:0000305" key="2"/>
<organism>
    <name type="scientific">Staphylococcus aureus (strain MRSA252)</name>
    <dbReference type="NCBI Taxonomy" id="282458"/>
    <lineage>
        <taxon>Bacteria</taxon>
        <taxon>Bacillati</taxon>
        <taxon>Bacillota</taxon>
        <taxon>Bacilli</taxon>
        <taxon>Bacillales</taxon>
        <taxon>Staphylococcaceae</taxon>
        <taxon>Staphylococcus</taxon>
    </lineage>
</organism>
<protein>
    <recommendedName>
        <fullName>Efem/EfeO family lipoprotein</fullName>
    </recommendedName>
</protein>